<dbReference type="EC" id="1.14.99.56" evidence="5 6"/>
<dbReference type="EMBL" id="KY884985">
    <property type="protein sequence ID" value="AST24379.1"/>
    <property type="molecule type" value="Genomic_DNA"/>
</dbReference>
<dbReference type="PDB" id="5NLT">
    <property type="method" value="X-ray"/>
    <property type="resolution" value="1.90 A"/>
    <property type="chains" value="A/B/C/D/E/F=23-274"/>
</dbReference>
<dbReference type="PDB" id="6YDC">
    <property type="method" value="X-ray"/>
    <property type="resolution" value="2.00 A"/>
    <property type="chains" value="A/B/C/D=23-274"/>
</dbReference>
<dbReference type="PDB" id="6YDD">
    <property type="method" value="X-ray"/>
    <property type="resolution" value="2.80 A"/>
    <property type="chains" value="A/B=23-274"/>
</dbReference>
<dbReference type="PDB" id="6YDE">
    <property type="method" value="X-ray"/>
    <property type="resolution" value="2.20 A"/>
    <property type="chains" value="A=23-274"/>
</dbReference>
<dbReference type="PDB" id="6YDF">
    <property type="method" value="X-ray"/>
    <property type="resolution" value="2.12 A"/>
    <property type="chains" value="A/B=23-274"/>
</dbReference>
<dbReference type="PDBsum" id="5NLT"/>
<dbReference type="PDBsum" id="6YDC"/>
<dbReference type="PDBsum" id="6YDD"/>
<dbReference type="PDBsum" id="6YDE"/>
<dbReference type="PDBsum" id="6YDF"/>
<dbReference type="SMR" id="A0A223GEC9"/>
<dbReference type="BRENDA" id="1.14.99.54">
    <property type="organism ID" value="1282"/>
</dbReference>
<dbReference type="GO" id="GO:0005576">
    <property type="term" value="C:extracellular region"/>
    <property type="evidence" value="ECO:0007669"/>
    <property type="project" value="UniProtKB-SubCell"/>
</dbReference>
<dbReference type="GO" id="GO:0046872">
    <property type="term" value="F:metal ion binding"/>
    <property type="evidence" value="ECO:0007669"/>
    <property type="project" value="UniProtKB-KW"/>
</dbReference>
<dbReference type="GO" id="GO:0004497">
    <property type="term" value="F:monooxygenase activity"/>
    <property type="evidence" value="ECO:0007669"/>
    <property type="project" value="UniProtKB-KW"/>
</dbReference>
<dbReference type="GO" id="GO:0030245">
    <property type="term" value="P:cellulose catabolic process"/>
    <property type="evidence" value="ECO:0007669"/>
    <property type="project" value="UniProtKB-KW"/>
</dbReference>
<dbReference type="CDD" id="cd21175">
    <property type="entry name" value="LPMO_AA9"/>
    <property type="match status" value="1"/>
</dbReference>
<dbReference type="Gene3D" id="2.70.50.70">
    <property type="match status" value="1"/>
</dbReference>
<dbReference type="InterPro" id="IPR049892">
    <property type="entry name" value="AA9"/>
</dbReference>
<dbReference type="InterPro" id="IPR005103">
    <property type="entry name" value="AA9_LPMO"/>
</dbReference>
<dbReference type="PANTHER" id="PTHR33353:SF17">
    <property type="entry name" value="ENDO-BETA-1,4-GLUCANASE D"/>
    <property type="match status" value="1"/>
</dbReference>
<dbReference type="PANTHER" id="PTHR33353">
    <property type="entry name" value="PUTATIVE (AFU_ORTHOLOGUE AFUA_1G12560)-RELATED"/>
    <property type="match status" value="1"/>
</dbReference>
<dbReference type="Pfam" id="PF03443">
    <property type="entry name" value="AA9"/>
    <property type="match status" value="1"/>
</dbReference>
<evidence type="ECO:0000250" key="1">
    <source>
        <dbReference type="UniProtKB" id="G2QCJ3"/>
    </source>
</evidence>
<evidence type="ECO:0000250" key="2">
    <source>
        <dbReference type="UniProtKB" id="Q1K8B6"/>
    </source>
</evidence>
<evidence type="ECO:0000250" key="3">
    <source>
        <dbReference type="UniProtKB" id="Q4WP32"/>
    </source>
</evidence>
<evidence type="ECO:0000255" key="4"/>
<evidence type="ECO:0000269" key="5">
    <source>
    </source>
</evidence>
<evidence type="ECO:0000269" key="6">
    <source>
    </source>
</evidence>
<evidence type="ECO:0000303" key="7">
    <source>
    </source>
</evidence>
<evidence type="ECO:0000305" key="8"/>
<evidence type="ECO:0000305" key="9">
    <source>
    </source>
</evidence>
<evidence type="ECO:0000305" key="10">
    <source>
    </source>
</evidence>
<evidence type="ECO:0007744" key="11">
    <source>
        <dbReference type="PDB" id="5NLT"/>
    </source>
</evidence>
<evidence type="ECO:0007744" key="12">
    <source>
        <dbReference type="PDB" id="6YDC"/>
    </source>
</evidence>
<evidence type="ECO:0007744" key="13">
    <source>
        <dbReference type="PDB" id="6YDD"/>
    </source>
</evidence>
<evidence type="ECO:0007744" key="14">
    <source>
        <dbReference type="PDB" id="6YDE"/>
    </source>
</evidence>
<evidence type="ECO:0007744" key="15">
    <source>
        <dbReference type="PDB" id="6YDF"/>
    </source>
</evidence>
<evidence type="ECO:0007829" key="16">
    <source>
        <dbReference type="PDB" id="5NLT"/>
    </source>
</evidence>
<evidence type="ECO:0007829" key="17">
    <source>
        <dbReference type="PDB" id="6YDC"/>
    </source>
</evidence>
<gene>
    <name evidence="7" type="primary">AA9A</name>
</gene>
<comment type="function">
    <text evidence="5 6">Lytic polysaccharide monooxygenase (LPMO) that depolymerizes crystalline and amorphous polysaccharides via the oxidation of scissile alpha- or beta-(1-4)-glycosidic bonds, yielding C4 oxidation products (PubMed:29057953, PubMed:32818374). Catalysis by LPMOs requires the reduction of the active-site copper from Cu(II) to Cu(I) by a reducing agent and H(2)O(2) or O(2) as a cosubstrate (PubMed:29057953). Cleaves a range of polysaccharides, including cellulose, xyloglucan, mixed-linkage glucan and glucomannan (PubMed:29057953, PubMed:32818374).</text>
</comment>
<comment type="catalytic activity">
    <reaction evidence="5 6">
        <text>[(1-&gt;4)-beta-D-glucosyl]n+m + reduced acceptor + O2 = 4-dehydro-beta-D-glucosyl-[(1-&gt;4)-beta-D-glucosyl]n-1 + [(1-&gt;4)-beta-D-glucosyl]m + acceptor + H2O.</text>
        <dbReference type="EC" id="1.14.99.56"/>
    </reaction>
</comment>
<comment type="cofactor">
    <cofactor evidence="5 6">
        <name>Cu(2+)</name>
        <dbReference type="ChEBI" id="CHEBI:29036"/>
    </cofactor>
    <text evidence="3">Binds 1 copper ion per subunit.</text>
</comment>
<comment type="subcellular location">
    <subcellularLocation>
        <location evidence="9">Secreted</location>
    </subcellularLocation>
</comment>
<comment type="biotechnology">
    <text evidence="1">Lignocellulose is the most abundant polymeric composite on Earth and is a recalcitrant but promising renewable substrate for industrial biotechnology applications. Together with cellobiose dehydrogenases (CDHs) an enzymatic system capable of oxidative cellulose cleavage is formed, which increases the efficiency of cellulases and put LPMOs at focus of biofuel research.</text>
</comment>
<comment type="similarity">
    <text evidence="8">Belongs to the polysaccharide monooxygenase AA9 family.</text>
</comment>
<sequence length="274" mass="29980">MHVPQFISTGALLALLARPAAAHTRMFSVWVNGVDQGDGQNVYIRTPPNTDPIKDLASPALACNVKGGEPVPQFVSASAGDKLTFEWYRVKRGDDIIDPSHSGPITTWIAAFTSPTMDGTGPVWSKIHEEGYDASTKSWAVDKLIANKGMWDFTLPSQLKPGKYMLRQEIVAHHESDATFDKNPKRGAQFYPSCVQVDVKGVGGDAVPDQAFDFNKGYKYSDPGIAFDMYTDFDSYPIPGPPVWDAQDEGCCFIDGVDTTSVKEVVKQIICVLK</sequence>
<reference evidence="11" key="1">
    <citation type="journal article" date="2017" name="Nat. Commun.">
        <title>Structural and electronic determinants of lytic polysaccharide monooxygenase reactivity on polysaccharide substrates.</title>
        <authorList>
            <person name="Simmons T.J."/>
            <person name="Frandsen K.E.H."/>
            <person name="Ciano L."/>
            <person name="Tryfona T."/>
            <person name="Lenfant N."/>
            <person name="Poulsen J.C."/>
            <person name="Wilson L.F.L."/>
            <person name="Tandrup T."/>
            <person name="Tovborg M."/>
            <person name="Schnorr K."/>
            <person name="Johansen K.S."/>
            <person name="Henrissat B."/>
            <person name="Walton P.H."/>
            <person name="Lo Leggio L."/>
            <person name="Dupree P."/>
        </authorList>
    </citation>
    <scope>NUCLEOTIDE SEQUENCE [GENOMIC DNA]</scope>
    <scope>X-RAY CRYSTALLOGRAPHY (1.90 ANGSTROMS) OF 23-274 IN COMPLEX WITH COPPER</scope>
    <scope>DISULFIDE BONDS</scope>
    <scope>COFACTOR</scope>
    <scope>FUNCTION</scope>
    <scope>CATALYTIC ACTIVITY</scope>
</reference>
<reference evidence="12 13 14 15" key="2">
    <citation type="journal article" date="2020" name="Biochemistry">
        <title>Oligosaccharide Binding and Thermostability of Two Related AA9 Lytic Polysaccharide Monooxygenases.</title>
        <authorList>
            <person name="Tandrup T."/>
            <person name="Tryfona T."/>
            <person name="Frandsen K.E.H."/>
            <person name="Johansen K.S."/>
            <person name="Dupree P."/>
            <person name="Lo Leggio L."/>
        </authorList>
    </citation>
    <scope>X-RAY CRYSTALLOGRAPHY (2.00 ANGSTROMS) OF 23-274 IN COMPLEX WITH COPPER AND OLIGOSACCHARIDES</scope>
    <scope>DISULFIDE BONDS</scope>
    <scope>COFACTOR</scope>
    <scope>FUNCTION</scope>
    <scope>CATALYTIC ACTIVITY</scope>
</reference>
<accession>A0A223GEC9</accession>
<proteinExistence type="evidence at protein level"/>
<keyword id="KW-0002">3D-structure</keyword>
<keyword id="KW-0119">Carbohydrate metabolism</keyword>
<keyword id="KW-0136">Cellulose degradation</keyword>
<keyword id="KW-0186">Copper</keyword>
<keyword id="KW-1015">Disulfide bond</keyword>
<keyword id="KW-0479">Metal-binding</keyword>
<keyword id="KW-0503">Monooxygenase</keyword>
<keyword id="KW-0560">Oxidoreductase</keyword>
<keyword id="KW-0624">Polysaccharide degradation</keyword>
<keyword id="KW-0964">Secreted</keyword>
<keyword id="KW-0732">Signal</keyword>
<name>LP9A_COLVR</name>
<organism>
    <name type="scientific">Collariella virescens</name>
    <name type="common">Soil fungus</name>
    <name type="synonym">Achaetomiella virescens</name>
    <dbReference type="NCBI Taxonomy" id="1934374"/>
    <lineage>
        <taxon>Eukaryota</taxon>
        <taxon>Fungi</taxon>
        <taxon>Dikarya</taxon>
        <taxon>Ascomycota</taxon>
        <taxon>Pezizomycotina</taxon>
        <taxon>Sordariomycetes</taxon>
        <taxon>Sordariomycetidae</taxon>
        <taxon>Sordariales</taxon>
        <taxon>Chaetomiaceae</taxon>
        <taxon>Achaetomiella</taxon>
    </lineage>
</organism>
<feature type="signal peptide" evidence="4">
    <location>
        <begin position="1"/>
        <end position="22"/>
    </location>
</feature>
<feature type="chain" id="PRO_5012646256" description="AA9 family lytic polysaccharide monooxygenase A">
    <location>
        <begin position="23"/>
        <end position="274"/>
    </location>
</feature>
<feature type="binding site" evidence="5 6 11 12 13 14 15">
    <location>
        <position position="23"/>
    </location>
    <ligand>
        <name>Cu(2+)</name>
        <dbReference type="ChEBI" id="CHEBI:29036"/>
        <note>catalytic</note>
    </ligand>
</feature>
<feature type="binding site" evidence="10 14">
    <location>
        <position position="67"/>
    </location>
    <ligand>
        <name>(1,4-beta-D-glucosyl)n</name>
        <dbReference type="ChEBI" id="CHEBI:18246"/>
    </ligand>
</feature>
<feature type="binding site" evidence="10 12 13 14">
    <location>
        <position position="98"/>
    </location>
    <ligand>
        <name>(1,4-beta-D-glucosyl)n</name>
        <dbReference type="ChEBI" id="CHEBI:18246"/>
    </ligand>
</feature>
<feature type="binding site" evidence="10 12 13 14">
    <location>
        <position position="100"/>
    </location>
    <ligand>
        <name>(1,4-beta-D-glucosyl)n</name>
        <dbReference type="ChEBI" id="CHEBI:18246"/>
    </ligand>
</feature>
<feature type="binding site" evidence="5 6 11 12 13 14 15">
    <location>
        <position position="101"/>
    </location>
    <ligand>
        <name>Cu(2+)</name>
        <dbReference type="ChEBI" id="CHEBI:29036"/>
        <note>catalytic</note>
    </ligand>
</feature>
<feature type="binding site" evidence="2">
    <location>
        <position position="174"/>
    </location>
    <ligand>
        <name>O2</name>
        <dbReference type="ChEBI" id="CHEBI:15379"/>
    </ligand>
</feature>
<feature type="binding site" evidence="10 12 13 14">
    <location>
        <position position="177"/>
    </location>
    <ligand>
        <name>(1,4-beta-D-glucosyl)n</name>
        <dbReference type="ChEBI" id="CHEBI:18246"/>
    </ligand>
</feature>
<feature type="binding site" evidence="5 6 11 12 13 14 15">
    <location>
        <position position="191"/>
    </location>
    <ligand>
        <name>Cu(2+)</name>
        <dbReference type="ChEBI" id="CHEBI:29036"/>
        <note>catalytic</note>
    </ligand>
</feature>
<feature type="disulfide bond" evidence="5 6 11 12 13 14 15">
    <location>
        <begin position="63"/>
        <end position="194"/>
    </location>
</feature>
<feature type="strand" evidence="16">
    <location>
        <begin position="25"/>
        <end position="31"/>
    </location>
</feature>
<feature type="turn" evidence="16">
    <location>
        <begin position="41"/>
        <end position="43"/>
    </location>
</feature>
<feature type="strand" evidence="16">
    <location>
        <begin position="48"/>
        <end position="50"/>
    </location>
</feature>
<feature type="helix" evidence="16">
    <location>
        <begin position="59"/>
        <end position="61"/>
    </location>
</feature>
<feature type="turn" evidence="16">
    <location>
        <begin position="65"/>
        <end position="68"/>
    </location>
</feature>
<feature type="strand" evidence="16">
    <location>
        <begin position="75"/>
        <end position="78"/>
    </location>
</feature>
<feature type="strand" evidence="16">
    <location>
        <begin position="82"/>
        <end position="91"/>
    </location>
</feature>
<feature type="strand" evidence="16">
    <location>
        <begin position="105"/>
        <end position="111"/>
    </location>
</feature>
<feature type="strand" evidence="16">
    <location>
        <begin position="124"/>
        <end position="130"/>
    </location>
</feature>
<feature type="turn" evidence="16">
    <location>
        <begin position="134"/>
        <end position="137"/>
    </location>
</feature>
<feature type="helix" evidence="16">
    <location>
        <begin position="140"/>
        <end position="146"/>
    </location>
</feature>
<feature type="turn" evidence="16">
    <location>
        <begin position="147"/>
        <end position="149"/>
    </location>
</feature>
<feature type="strand" evidence="16">
    <location>
        <begin position="150"/>
        <end position="154"/>
    </location>
</feature>
<feature type="strand" evidence="16">
    <location>
        <begin position="161"/>
        <end position="172"/>
    </location>
</feature>
<feature type="turn" evidence="16">
    <location>
        <begin position="174"/>
        <end position="177"/>
    </location>
</feature>
<feature type="turn" evidence="16">
    <location>
        <begin position="180"/>
        <end position="182"/>
    </location>
</feature>
<feature type="strand" evidence="16">
    <location>
        <begin position="189"/>
        <end position="200"/>
    </location>
</feature>
<feature type="helix" evidence="16">
    <location>
        <begin position="214"/>
        <end position="217"/>
    </location>
</feature>
<feature type="turn" evidence="16">
    <location>
        <begin position="223"/>
        <end position="225"/>
    </location>
</feature>
<feature type="strand" evidence="17">
    <location>
        <begin position="229"/>
        <end position="231"/>
    </location>
</feature>
<feature type="strand" evidence="16">
    <location>
        <begin position="239"/>
        <end position="241"/>
    </location>
</feature>
<protein>
    <recommendedName>
        <fullName evidence="7">AA9 family lytic polysaccharide monooxygenase A</fullName>
        <shortName evidence="7">CvAA9A</shortName>
        <ecNumber evidence="5 6">1.14.99.56</ecNumber>
    </recommendedName>
    <alternativeName>
        <fullName evidence="8">Cellulase AA9A</fullName>
    </alternativeName>
    <alternativeName>
        <fullName evidence="8">Endo-beta-1,4-glucanase AA9A</fullName>
        <shortName evidence="8">Endoglucanase AA9A</shortName>
    </alternativeName>
    <alternativeName>
        <fullName evidence="8">Glycosyl hydrolase 61 family protein AA9A</fullName>
    </alternativeName>
</protein>